<comment type="function">
    <text evidence="1">Together with its co-chaperonin GroES, plays an essential role in assisting protein folding. The GroEL-GroES system forms a nano-cage that allows encapsulation of the non-native substrate proteins and provides a physical environment optimized to promote and accelerate protein folding.</text>
</comment>
<comment type="catalytic activity">
    <reaction evidence="1">
        <text>ATP + H2O + a folded polypeptide = ADP + phosphate + an unfolded polypeptide.</text>
        <dbReference type="EC" id="5.6.1.7"/>
    </reaction>
</comment>
<comment type="subunit">
    <text evidence="1">Forms a cylinder of 14 subunits composed of two heptameric rings stacked back-to-back. Interacts with the co-chaperonin GroES.</text>
</comment>
<comment type="subcellular location">
    <subcellularLocation>
        <location evidence="1">Cytoplasm</location>
    </subcellularLocation>
</comment>
<comment type="similarity">
    <text evidence="1">Belongs to the chaperonin (HSP60) family.</text>
</comment>
<protein>
    <recommendedName>
        <fullName evidence="1">Chaperonin GroEL</fullName>
        <ecNumber evidence="1">5.6.1.7</ecNumber>
    </recommendedName>
    <alternativeName>
        <fullName evidence="1">60 kDa chaperonin</fullName>
    </alternativeName>
    <alternativeName>
        <fullName evidence="1">Chaperonin-60</fullName>
        <shortName evidence="1">Cpn60</shortName>
    </alternativeName>
</protein>
<reference key="1">
    <citation type="submission" date="2008-10" db="EMBL/GenBank/DDBJ databases">
        <title>Genome sequence of Bacillus cereus AH187.</title>
        <authorList>
            <person name="Dodson R.J."/>
            <person name="Durkin A.S."/>
            <person name="Rosovitz M.J."/>
            <person name="Rasko D.A."/>
            <person name="Kolsto A.B."/>
            <person name="Okstad O.A."/>
            <person name="Ravel J."/>
            <person name="Sutton G."/>
        </authorList>
    </citation>
    <scope>NUCLEOTIDE SEQUENCE [LARGE SCALE GENOMIC DNA]</scope>
    <source>
        <strain>AH187</strain>
    </source>
</reference>
<feature type="chain" id="PRO_1000129974" description="Chaperonin GroEL">
    <location>
        <begin position="1"/>
        <end position="544"/>
    </location>
</feature>
<feature type="binding site" evidence="1">
    <location>
        <begin position="29"/>
        <end position="32"/>
    </location>
    <ligand>
        <name>ATP</name>
        <dbReference type="ChEBI" id="CHEBI:30616"/>
    </ligand>
</feature>
<feature type="binding site" evidence="1">
    <location>
        <begin position="86"/>
        <end position="90"/>
    </location>
    <ligand>
        <name>ATP</name>
        <dbReference type="ChEBI" id="CHEBI:30616"/>
    </ligand>
</feature>
<feature type="binding site" evidence="1">
    <location>
        <position position="413"/>
    </location>
    <ligand>
        <name>ATP</name>
        <dbReference type="ChEBI" id="CHEBI:30616"/>
    </ligand>
</feature>
<feature type="binding site" evidence="1">
    <location>
        <begin position="476"/>
        <end position="478"/>
    </location>
    <ligand>
        <name>ATP</name>
        <dbReference type="ChEBI" id="CHEBI:30616"/>
    </ligand>
</feature>
<feature type="binding site" evidence="1">
    <location>
        <position position="492"/>
    </location>
    <ligand>
        <name>ATP</name>
        <dbReference type="ChEBI" id="CHEBI:30616"/>
    </ligand>
</feature>
<evidence type="ECO:0000255" key="1">
    <source>
        <dbReference type="HAMAP-Rule" id="MF_00600"/>
    </source>
</evidence>
<dbReference type="EC" id="5.6.1.7" evidence="1"/>
<dbReference type="EMBL" id="CP001177">
    <property type="protein sequence ID" value="ACJ79330.1"/>
    <property type="molecule type" value="Genomic_DNA"/>
</dbReference>
<dbReference type="SMR" id="B7HS05"/>
<dbReference type="KEGG" id="bcr:BCAH187_A0317"/>
<dbReference type="HOGENOM" id="CLU_016503_3_0_9"/>
<dbReference type="Proteomes" id="UP000002214">
    <property type="component" value="Chromosome"/>
</dbReference>
<dbReference type="GO" id="GO:0005737">
    <property type="term" value="C:cytoplasm"/>
    <property type="evidence" value="ECO:0007669"/>
    <property type="project" value="UniProtKB-SubCell"/>
</dbReference>
<dbReference type="GO" id="GO:0005524">
    <property type="term" value="F:ATP binding"/>
    <property type="evidence" value="ECO:0007669"/>
    <property type="project" value="UniProtKB-UniRule"/>
</dbReference>
<dbReference type="GO" id="GO:0140662">
    <property type="term" value="F:ATP-dependent protein folding chaperone"/>
    <property type="evidence" value="ECO:0007669"/>
    <property type="project" value="InterPro"/>
</dbReference>
<dbReference type="GO" id="GO:0016853">
    <property type="term" value="F:isomerase activity"/>
    <property type="evidence" value="ECO:0007669"/>
    <property type="project" value="UniProtKB-KW"/>
</dbReference>
<dbReference type="GO" id="GO:0051082">
    <property type="term" value="F:unfolded protein binding"/>
    <property type="evidence" value="ECO:0007669"/>
    <property type="project" value="UniProtKB-UniRule"/>
</dbReference>
<dbReference type="GO" id="GO:0042026">
    <property type="term" value="P:protein refolding"/>
    <property type="evidence" value="ECO:0007669"/>
    <property type="project" value="UniProtKB-UniRule"/>
</dbReference>
<dbReference type="CDD" id="cd03344">
    <property type="entry name" value="GroEL"/>
    <property type="match status" value="1"/>
</dbReference>
<dbReference type="FunFam" id="1.10.560.10:FF:000001">
    <property type="entry name" value="60 kDa chaperonin"/>
    <property type="match status" value="1"/>
</dbReference>
<dbReference type="FunFam" id="3.50.7.10:FF:000001">
    <property type="entry name" value="60 kDa chaperonin"/>
    <property type="match status" value="1"/>
</dbReference>
<dbReference type="Gene3D" id="3.50.7.10">
    <property type="entry name" value="GroEL"/>
    <property type="match status" value="1"/>
</dbReference>
<dbReference type="Gene3D" id="1.10.560.10">
    <property type="entry name" value="GroEL-like equatorial domain"/>
    <property type="match status" value="1"/>
</dbReference>
<dbReference type="Gene3D" id="3.30.260.10">
    <property type="entry name" value="TCP-1-like chaperonin intermediate domain"/>
    <property type="match status" value="1"/>
</dbReference>
<dbReference type="HAMAP" id="MF_00600">
    <property type="entry name" value="CH60"/>
    <property type="match status" value="1"/>
</dbReference>
<dbReference type="InterPro" id="IPR018370">
    <property type="entry name" value="Chaperonin_Cpn60_CS"/>
</dbReference>
<dbReference type="InterPro" id="IPR001844">
    <property type="entry name" value="Cpn60/GroEL"/>
</dbReference>
<dbReference type="InterPro" id="IPR002423">
    <property type="entry name" value="Cpn60/GroEL/TCP-1"/>
</dbReference>
<dbReference type="InterPro" id="IPR027409">
    <property type="entry name" value="GroEL-like_apical_dom_sf"/>
</dbReference>
<dbReference type="InterPro" id="IPR027413">
    <property type="entry name" value="GROEL-like_equatorial_sf"/>
</dbReference>
<dbReference type="InterPro" id="IPR027410">
    <property type="entry name" value="TCP-1-like_intermed_sf"/>
</dbReference>
<dbReference type="NCBIfam" id="TIGR02348">
    <property type="entry name" value="GroEL"/>
    <property type="match status" value="1"/>
</dbReference>
<dbReference type="NCBIfam" id="NF000592">
    <property type="entry name" value="PRK00013.1"/>
    <property type="match status" value="1"/>
</dbReference>
<dbReference type="NCBIfam" id="NF009487">
    <property type="entry name" value="PRK12849.1"/>
    <property type="match status" value="1"/>
</dbReference>
<dbReference type="NCBIfam" id="NF009488">
    <property type="entry name" value="PRK12850.1"/>
    <property type="match status" value="1"/>
</dbReference>
<dbReference type="NCBIfam" id="NF009489">
    <property type="entry name" value="PRK12851.1"/>
    <property type="match status" value="1"/>
</dbReference>
<dbReference type="PANTHER" id="PTHR45633">
    <property type="entry name" value="60 KDA HEAT SHOCK PROTEIN, MITOCHONDRIAL"/>
    <property type="match status" value="1"/>
</dbReference>
<dbReference type="Pfam" id="PF00118">
    <property type="entry name" value="Cpn60_TCP1"/>
    <property type="match status" value="1"/>
</dbReference>
<dbReference type="PRINTS" id="PR00298">
    <property type="entry name" value="CHAPERONIN60"/>
</dbReference>
<dbReference type="SUPFAM" id="SSF52029">
    <property type="entry name" value="GroEL apical domain-like"/>
    <property type="match status" value="1"/>
</dbReference>
<dbReference type="SUPFAM" id="SSF48592">
    <property type="entry name" value="GroEL equatorial domain-like"/>
    <property type="match status" value="1"/>
</dbReference>
<dbReference type="SUPFAM" id="SSF54849">
    <property type="entry name" value="GroEL-intermediate domain like"/>
    <property type="match status" value="1"/>
</dbReference>
<dbReference type="PROSITE" id="PS00296">
    <property type="entry name" value="CHAPERONINS_CPN60"/>
    <property type="match status" value="1"/>
</dbReference>
<accession>B7HS05</accession>
<sequence>MAKDIKFSEEARRSMLRGVDTLANAVKVTLGPKGRNVVLEKKFGSPLITNDGVTIAKEIELEDAFENMGAKLVAEVASKTNDVAGDGTTTATVLAQAMIREGLKNVTAGANPMGLRKGIEKAVVAAVEELKTISKPIEGKSSIAQVAAISAADEEVGQLIAEAMERVGNDGVITLEESKGFTTELDVVEGMQFDRGYASPYMITDSDKMEAVLDNPYILITDKKISNIQEILPVLEQVVQQGKPLLIIAEDVEGEALATLVVNKLRGTFNVVAVKAPGFGDRRKAMLEDIAILTGGEVITEELGRDLKSATVESLGRAGKVVVTKENTTVVEGVGSTEQIEARIGQIRAQLEETTSEFDREKLQERLAKLAGGVAVIKVGAATETELKERKLRIEDALNSTRAAVEEGIVAGGGTSLMNVYTKVASIVAEGDEATGINIVLRALEEPVRQIAINAGLEGSVVVERLKGEKVGVGFNAATGEWVNMLETGIVDPAKVTRSALQNAASVAAMFLTTEAVVADKPEPNAPAMPDMGGMGMGGMGGMM</sequence>
<proteinExistence type="inferred from homology"/>
<organism>
    <name type="scientific">Bacillus cereus (strain AH187)</name>
    <dbReference type="NCBI Taxonomy" id="405534"/>
    <lineage>
        <taxon>Bacteria</taxon>
        <taxon>Bacillati</taxon>
        <taxon>Bacillota</taxon>
        <taxon>Bacilli</taxon>
        <taxon>Bacillales</taxon>
        <taxon>Bacillaceae</taxon>
        <taxon>Bacillus</taxon>
        <taxon>Bacillus cereus group</taxon>
    </lineage>
</organism>
<gene>
    <name evidence="1" type="primary">groEL</name>
    <name evidence="1" type="synonym">groL</name>
    <name type="ordered locus">BCAH187_A0317</name>
</gene>
<name>CH60_BACC7</name>
<keyword id="KW-0067">ATP-binding</keyword>
<keyword id="KW-0143">Chaperone</keyword>
<keyword id="KW-0963">Cytoplasm</keyword>
<keyword id="KW-0413">Isomerase</keyword>
<keyword id="KW-0547">Nucleotide-binding</keyword>